<protein>
    <recommendedName>
        <fullName evidence="1">dITP/XTP pyrophosphatase</fullName>
        <ecNumber evidence="1">3.6.1.66</ecNumber>
    </recommendedName>
    <alternativeName>
        <fullName evidence="1">Non-canonical purine NTP pyrophosphatase</fullName>
    </alternativeName>
    <alternativeName>
        <fullName evidence="1">Non-standard purine NTP pyrophosphatase</fullName>
    </alternativeName>
    <alternativeName>
        <fullName evidence="1">Nucleoside-triphosphate diphosphatase</fullName>
    </alternativeName>
    <alternativeName>
        <fullName evidence="1">Nucleoside-triphosphate pyrophosphatase</fullName>
        <shortName evidence="1">NTPase</shortName>
    </alternativeName>
</protein>
<organism>
    <name type="scientific">Staphylococcus aureus (strain MRSA252)</name>
    <dbReference type="NCBI Taxonomy" id="282458"/>
    <lineage>
        <taxon>Bacteria</taxon>
        <taxon>Bacillati</taxon>
        <taxon>Bacillota</taxon>
        <taxon>Bacilli</taxon>
        <taxon>Bacillales</taxon>
        <taxon>Staphylococcaceae</taxon>
        <taxon>Staphylococcus</taxon>
    </lineage>
</organism>
<keyword id="KW-0378">Hydrolase</keyword>
<keyword id="KW-0460">Magnesium</keyword>
<keyword id="KW-0479">Metal-binding</keyword>
<keyword id="KW-0546">Nucleotide metabolism</keyword>
<keyword id="KW-0547">Nucleotide-binding</keyword>
<name>IXTPA_STAAR</name>
<sequence>MKEIVIASNNQGKINDFKVIFPDYHVIGISELILDFDVEETGSTFEENAILKSEAAAKALNKTVIADDSGLEVFALNGEPGIYSARYAGENKSDEANIEKLLNKLGNTTDRRAQFVCVISMSGPDMETKVFKGTVSGEIADGKYGENGFGYDPIFYVPKLDRTMAQLSKEQKGQISHRRNAINLLEAYLAGDQNV</sequence>
<gene>
    <name type="ordered locus">SAR1124</name>
</gene>
<evidence type="ECO:0000255" key="1">
    <source>
        <dbReference type="HAMAP-Rule" id="MF_01405"/>
    </source>
</evidence>
<accession>Q6GHT4</accession>
<feature type="chain" id="PRO_0000178230" description="dITP/XTP pyrophosphatase">
    <location>
        <begin position="1"/>
        <end position="195"/>
    </location>
</feature>
<feature type="active site" description="Proton acceptor" evidence="1">
    <location>
        <position position="68"/>
    </location>
</feature>
<feature type="binding site" evidence="1">
    <location>
        <begin position="8"/>
        <end position="13"/>
    </location>
    <ligand>
        <name>substrate</name>
    </ligand>
</feature>
<feature type="binding site" evidence="1">
    <location>
        <position position="39"/>
    </location>
    <ligand>
        <name>Mg(2+)</name>
        <dbReference type="ChEBI" id="CHEBI:18420"/>
    </ligand>
</feature>
<feature type="binding site" evidence="1">
    <location>
        <position position="68"/>
    </location>
    <ligand>
        <name>Mg(2+)</name>
        <dbReference type="ChEBI" id="CHEBI:18420"/>
    </ligand>
</feature>
<feature type="binding site" evidence="1">
    <location>
        <position position="69"/>
    </location>
    <ligand>
        <name>substrate</name>
    </ligand>
</feature>
<feature type="binding site" evidence="1">
    <location>
        <begin position="149"/>
        <end position="152"/>
    </location>
    <ligand>
        <name>substrate</name>
    </ligand>
</feature>
<feature type="binding site" evidence="1">
    <location>
        <position position="172"/>
    </location>
    <ligand>
        <name>substrate</name>
    </ligand>
</feature>
<feature type="binding site" evidence="1">
    <location>
        <begin position="177"/>
        <end position="178"/>
    </location>
    <ligand>
        <name>substrate</name>
    </ligand>
</feature>
<proteinExistence type="inferred from homology"/>
<dbReference type="EC" id="3.6.1.66" evidence="1"/>
<dbReference type="EMBL" id="BX571856">
    <property type="protein sequence ID" value="CAG40127.1"/>
    <property type="molecule type" value="Genomic_DNA"/>
</dbReference>
<dbReference type="RefSeq" id="WP_000659309.1">
    <property type="nucleotide sequence ID" value="NC_002952.2"/>
</dbReference>
<dbReference type="SMR" id="Q6GHT4"/>
<dbReference type="KEGG" id="sar:SAR1124"/>
<dbReference type="HOGENOM" id="CLU_082080_0_2_9"/>
<dbReference type="Proteomes" id="UP000000596">
    <property type="component" value="Chromosome"/>
</dbReference>
<dbReference type="GO" id="GO:0005829">
    <property type="term" value="C:cytosol"/>
    <property type="evidence" value="ECO:0007669"/>
    <property type="project" value="TreeGrafter"/>
</dbReference>
<dbReference type="GO" id="GO:0035870">
    <property type="term" value="F:dITP diphosphatase activity"/>
    <property type="evidence" value="ECO:0007669"/>
    <property type="project" value="RHEA"/>
</dbReference>
<dbReference type="GO" id="GO:0036220">
    <property type="term" value="F:ITP diphosphatase activity"/>
    <property type="evidence" value="ECO:0007669"/>
    <property type="project" value="UniProtKB-EC"/>
</dbReference>
<dbReference type="GO" id="GO:0046872">
    <property type="term" value="F:metal ion binding"/>
    <property type="evidence" value="ECO:0007669"/>
    <property type="project" value="UniProtKB-KW"/>
</dbReference>
<dbReference type="GO" id="GO:0000166">
    <property type="term" value="F:nucleotide binding"/>
    <property type="evidence" value="ECO:0007669"/>
    <property type="project" value="UniProtKB-KW"/>
</dbReference>
<dbReference type="GO" id="GO:0017111">
    <property type="term" value="F:ribonucleoside triphosphate phosphatase activity"/>
    <property type="evidence" value="ECO:0007669"/>
    <property type="project" value="InterPro"/>
</dbReference>
<dbReference type="GO" id="GO:0036222">
    <property type="term" value="F:XTP diphosphatase activity"/>
    <property type="evidence" value="ECO:0007669"/>
    <property type="project" value="RHEA"/>
</dbReference>
<dbReference type="GO" id="GO:0009117">
    <property type="term" value="P:nucleotide metabolic process"/>
    <property type="evidence" value="ECO:0007669"/>
    <property type="project" value="UniProtKB-KW"/>
</dbReference>
<dbReference type="GO" id="GO:0009146">
    <property type="term" value="P:purine nucleoside triphosphate catabolic process"/>
    <property type="evidence" value="ECO:0007669"/>
    <property type="project" value="UniProtKB-UniRule"/>
</dbReference>
<dbReference type="CDD" id="cd00515">
    <property type="entry name" value="HAM1"/>
    <property type="match status" value="1"/>
</dbReference>
<dbReference type="FunFam" id="3.90.950.10:FF:000001">
    <property type="entry name" value="dITP/XTP pyrophosphatase"/>
    <property type="match status" value="1"/>
</dbReference>
<dbReference type="Gene3D" id="3.90.950.10">
    <property type="match status" value="1"/>
</dbReference>
<dbReference type="HAMAP" id="MF_01405">
    <property type="entry name" value="Non_canon_purine_NTPase"/>
    <property type="match status" value="1"/>
</dbReference>
<dbReference type="InterPro" id="IPR020922">
    <property type="entry name" value="dITP/XTP_pyrophosphatase"/>
</dbReference>
<dbReference type="InterPro" id="IPR029001">
    <property type="entry name" value="ITPase-like_fam"/>
</dbReference>
<dbReference type="InterPro" id="IPR002637">
    <property type="entry name" value="RdgB/HAM1"/>
</dbReference>
<dbReference type="NCBIfam" id="NF011397">
    <property type="entry name" value="PRK14822.1"/>
    <property type="match status" value="1"/>
</dbReference>
<dbReference type="NCBIfam" id="TIGR00042">
    <property type="entry name" value="RdgB/HAM1 family non-canonical purine NTP pyrophosphatase"/>
    <property type="match status" value="1"/>
</dbReference>
<dbReference type="PANTHER" id="PTHR11067:SF9">
    <property type="entry name" value="INOSINE TRIPHOSPHATE PYROPHOSPHATASE"/>
    <property type="match status" value="1"/>
</dbReference>
<dbReference type="PANTHER" id="PTHR11067">
    <property type="entry name" value="INOSINE TRIPHOSPHATE PYROPHOSPHATASE/HAM1 PROTEIN"/>
    <property type="match status" value="1"/>
</dbReference>
<dbReference type="Pfam" id="PF01725">
    <property type="entry name" value="Ham1p_like"/>
    <property type="match status" value="1"/>
</dbReference>
<dbReference type="SUPFAM" id="SSF52972">
    <property type="entry name" value="ITPase-like"/>
    <property type="match status" value="1"/>
</dbReference>
<comment type="function">
    <text evidence="1">Pyrophosphatase that catalyzes the hydrolysis of nucleoside triphosphates to their monophosphate derivatives, with a high preference for the non-canonical purine nucleotides XTP (xanthosine triphosphate), dITP (deoxyinosine triphosphate) and ITP. Seems to function as a house-cleaning enzyme that removes non-canonical purine nucleotides from the nucleotide pool, thus preventing their incorporation into DNA/RNA and avoiding chromosomal lesions.</text>
</comment>
<comment type="catalytic activity">
    <reaction evidence="1">
        <text>XTP + H2O = XMP + diphosphate + H(+)</text>
        <dbReference type="Rhea" id="RHEA:28610"/>
        <dbReference type="ChEBI" id="CHEBI:15377"/>
        <dbReference type="ChEBI" id="CHEBI:15378"/>
        <dbReference type="ChEBI" id="CHEBI:33019"/>
        <dbReference type="ChEBI" id="CHEBI:57464"/>
        <dbReference type="ChEBI" id="CHEBI:61314"/>
        <dbReference type="EC" id="3.6.1.66"/>
    </reaction>
</comment>
<comment type="catalytic activity">
    <reaction evidence="1">
        <text>dITP + H2O = dIMP + diphosphate + H(+)</text>
        <dbReference type="Rhea" id="RHEA:28342"/>
        <dbReference type="ChEBI" id="CHEBI:15377"/>
        <dbReference type="ChEBI" id="CHEBI:15378"/>
        <dbReference type="ChEBI" id="CHEBI:33019"/>
        <dbReference type="ChEBI" id="CHEBI:61194"/>
        <dbReference type="ChEBI" id="CHEBI:61382"/>
        <dbReference type="EC" id="3.6.1.66"/>
    </reaction>
</comment>
<comment type="catalytic activity">
    <reaction evidence="1">
        <text>ITP + H2O = IMP + diphosphate + H(+)</text>
        <dbReference type="Rhea" id="RHEA:29399"/>
        <dbReference type="ChEBI" id="CHEBI:15377"/>
        <dbReference type="ChEBI" id="CHEBI:15378"/>
        <dbReference type="ChEBI" id="CHEBI:33019"/>
        <dbReference type="ChEBI" id="CHEBI:58053"/>
        <dbReference type="ChEBI" id="CHEBI:61402"/>
        <dbReference type="EC" id="3.6.1.66"/>
    </reaction>
</comment>
<comment type="cofactor">
    <cofactor evidence="1">
        <name>Mg(2+)</name>
        <dbReference type="ChEBI" id="CHEBI:18420"/>
    </cofactor>
    <text evidence="1">Binds 1 Mg(2+) ion per subunit.</text>
</comment>
<comment type="subunit">
    <text evidence="1">Homodimer.</text>
</comment>
<comment type="similarity">
    <text evidence="1">Belongs to the HAM1 NTPase family.</text>
</comment>
<reference key="1">
    <citation type="journal article" date="2004" name="Proc. Natl. Acad. Sci. U.S.A.">
        <title>Complete genomes of two clinical Staphylococcus aureus strains: evidence for the rapid evolution of virulence and drug resistance.</title>
        <authorList>
            <person name="Holden M.T.G."/>
            <person name="Feil E.J."/>
            <person name="Lindsay J.A."/>
            <person name="Peacock S.J."/>
            <person name="Day N.P.J."/>
            <person name="Enright M.C."/>
            <person name="Foster T.J."/>
            <person name="Moore C.E."/>
            <person name="Hurst L."/>
            <person name="Atkin R."/>
            <person name="Barron A."/>
            <person name="Bason N."/>
            <person name="Bentley S.D."/>
            <person name="Chillingworth C."/>
            <person name="Chillingworth T."/>
            <person name="Churcher C."/>
            <person name="Clark L."/>
            <person name="Corton C."/>
            <person name="Cronin A."/>
            <person name="Doggett J."/>
            <person name="Dowd L."/>
            <person name="Feltwell T."/>
            <person name="Hance Z."/>
            <person name="Harris B."/>
            <person name="Hauser H."/>
            <person name="Holroyd S."/>
            <person name="Jagels K."/>
            <person name="James K.D."/>
            <person name="Lennard N."/>
            <person name="Line A."/>
            <person name="Mayes R."/>
            <person name="Moule S."/>
            <person name="Mungall K."/>
            <person name="Ormond D."/>
            <person name="Quail M.A."/>
            <person name="Rabbinowitsch E."/>
            <person name="Rutherford K.M."/>
            <person name="Sanders M."/>
            <person name="Sharp S."/>
            <person name="Simmonds M."/>
            <person name="Stevens K."/>
            <person name="Whitehead S."/>
            <person name="Barrell B.G."/>
            <person name="Spratt B.G."/>
            <person name="Parkhill J."/>
        </authorList>
    </citation>
    <scope>NUCLEOTIDE SEQUENCE [LARGE SCALE GENOMIC DNA]</scope>
    <source>
        <strain>MRSA252</strain>
    </source>
</reference>